<organism>
    <name type="scientific">Streptococcus equi subsp. zooepidemicus (strain MGCS10565)</name>
    <dbReference type="NCBI Taxonomy" id="552526"/>
    <lineage>
        <taxon>Bacteria</taxon>
        <taxon>Bacillati</taxon>
        <taxon>Bacillota</taxon>
        <taxon>Bacilli</taxon>
        <taxon>Lactobacillales</taxon>
        <taxon>Streptococcaceae</taxon>
        <taxon>Streptococcus</taxon>
    </lineage>
</organism>
<sequence length="501" mass="54676">MAINAQEISALIKKQIENFQPNFDVTETGVVTYIGDGIARARGLDNAMSGELLEFSNGTFGMAQNLESNDVGIIILGDFSTIREGDEVKRTGKIMEVPVGEALIGRVVNPLGQPVDGLGDIETTGFRPVETPAPGVMQRKSVFEPLQTGLKAIDALVPIGRGQRELIIGDRQTGKTSVAIDAILNQKGQDMICIYVAIGQKESTVRTQVETLRRYGALDYTIVVTASASQPSPLLFIAPYAGVAMAEEFMYNGKHVLIVYDDLSKQAVAYRELSLLLRRPPGREAYPGDVFYLHSRLLERSAKVSDDLGGGSITALPFIETQAGDISAYIATNVISITDGQIFLQEDLFNSGIRPAIDAGSSVSRVGGSAQIKAMKRVAGTLRLDLASYRELEAFTQFGSDLDAATQAKLNRGRRTVEILKQPLHKPLPVEKQVVILYALTHGFLDDVPVDDILAFEEALYDYFDAHYDHLFETIRTTKDLPQEAELDAAIQAFKAQSNFK</sequence>
<evidence type="ECO:0000255" key="1">
    <source>
        <dbReference type="HAMAP-Rule" id="MF_01346"/>
    </source>
</evidence>
<reference key="1">
    <citation type="journal article" date="2008" name="PLoS ONE">
        <title>Genome sequence of a lancefield group C Streptococcus zooepidemicus strain causing epidemic nephritis: new information about an old disease.</title>
        <authorList>
            <person name="Beres S.B."/>
            <person name="Sesso R."/>
            <person name="Pinto S.W.L."/>
            <person name="Hoe N.P."/>
            <person name="Porcella S.F."/>
            <person name="Deleo F.R."/>
            <person name="Musser J.M."/>
        </authorList>
    </citation>
    <scope>NUCLEOTIDE SEQUENCE [LARGE SCALE GENOMIC DNA]</scope>
    <source>
        <strain>MGCS10565</strain>
    </source>
</reference>
<proteinExistence type="inferred from homology"/>
<protein>
    <recommendedName>
        <fullName evidence="1">ATP synthase subunit alpha</fullName>
        <ecNumber evidence="1">7.1.2.2</ecNumber>
    </recommendedName>
    <alternativeName>
        <fullName evidence="1">ATP synthase F1 sector subunit alpha</fullName>
    </alternativeName>
    <alternativeName>
        <fullName evidence="1">F-ATPase subunit alpha</fullName>
    </alternativeName>
</protein>
<feature type="chain" id="PRO_1000143439" description="ATP synthase subunit alpha">
    <location>
        <begin position="1"/>
        <end position="501"/>
    </location>
</feature>
<feature type="binding site" evidence="1">
    <location>
        <begin position="169"/>
        <end position="176"/>
    </location>
    <ligand>
        <name>ATP</name>
        <dbReference type="ChEBI" id="CHEBI:30616"/>
    </ligand>
</feature>
<feature type="site" description="Required for activity" evidence="1">
    <location>
        <position position="362"/>
    </location>
</feature>
<gene>
    <name evidence="1" type="primary">atpA</name>
    <name type="ordered locus">Sez_0796</name>
</gene>
<name>ATPA_STREM</name>
<dbReference type="EC" id="7.1.2.2" evidence="1"/>
<dbReference type="EMBL" id="CP001129">
    <property type="protein sequence ID" value="ACG62156.1"/>
    <property type="molecule type" value="Genomic_DNA"/>
</dbReference>
<dbReference type="RefSeq" id="WP_012515430.1">
    <property type="nucleotide sequence ID" value="NC_011134.1"/>
</dbReference>
<dbReference type="SMR" id="B4U2D9"/>
<dbReference type="GeneID" id="83704675"/>
<dbReference type="KEGG" id="sez:Sez_0796"/>
<dbReference type="HOGENOM" id="CLU_010091_2_1_9"/>
<dbReference type="Proteomes" id="UP000001873">
    <property type="component" value="Chromosome"/>
</dbReference>
<dbReference type="GO" id="GO:0005886">
    <property type="term" value="C:plasma membrane"/>
    <property type="evidence" value="ECO:0007669"/>
    <property type="project" value="UniProtKB-SubCell"/>
</dbReference>
<dbReference type="GO" id="GO:0045259">
    <property type="term" value="C:proton-transporting ATP synthase complex"/>
    <property type="evidence" value="ECO:0007669"/>
    <property type="project" value="UniProtKB-KW"/>
</dbReference>
<dbReference type="GO" id="GO:0043531">
    <property type="term" value="F:ADP binding"/>
    <property type="evidence" value="ECO:0007669"/>
    <property type="project" value="TreeGrafter"/>
</dbReference>
<dbReference type="GO" id="GO:0005524">
    <property type="term" value="F:ATP binding"/>
    <property type="evidence" value="ECO:0007669"/>
    <property type="project" value="UniProtKB-UniRule"/>
</dbReference>
<dbReference type="GO" id="GO:0046933">
    <property type="term" value="F:proton-transporting ATP synthase activity, rotational mechanism"/>
    <property type="evidence" value="ECO:0007669"/>
    <property type="project" value="UniProtKB-UniRule"/>
</dbReference>
<dbReference type="CDD" id="cd18113">
    <property type="entry name" value="ATP-synt_F1_alpha_C"/>
    <property type="match status" value="1"/>
</dbReference>
<dbReference type="CDD" id="cd18116">
    <property type="entry name" value="ATP-synt_F1_alpha_N"/>
    <property type="match status" value="1"/>
</dbReference>
<dbReference type="CDD" id="cd01132">
    <property type="entry name" value="F1-ATPase_alpha_CD"/>
    <property type="match status" value="1"/>
</dbReference>
<dbReference type="FunFam" id="1.20.150.20:FF:000001">
    <property type="entry name" value="ATP synthase subunit alpha"/>
    <property type="match status" value="1"/>
</dbReference>
<dbReference type="FunFam" id="2.40.30.20:FF:000001">
    <property type="entry name" value="ATP synthase subunit alpha"/>
    <property type="match status" value="1"/>
</dbReference>
<dbReference type="FunFam" id="3.40.50.300:FF:000002">
    <property type="entry name" value="ATP synthase subunit alpha"/>
    <property type="match status" value="1"/>
</dbReference>
<dbReference type="Gene3D" id="2.40.30.20">
    <property type="match status" value="1"/>
</dbReference>
<dbReference type="Gene3D" id="1.20.150.20">
    <property type="entry name" value="ATP synthase alpha/beta chain, C-terminal domain"/>
    <property type="match status" value="1"/>
</dbReference>
<dbReference type="Gene3D" id="3.40.50.300">
    <property type="entry name" value="P-loop containing nucleotide triphosphate hydrolases"/>
    <property type="match status" value="1"/>
</dbReference>
<dbReference type="HAMAP" id="MF_01346">
    <property type="entry name" value="ATP_synth_alpha_bact"/>
    <property type="match status" value="1"/>
</dbReference>
<dbReference type="InterPro" id="IPR023366">
    <property type="entry name" value="ATP_synth_asu-like_sf"/>
</dbReference>
<dbReference type="InterPro" id="IPR000793">
    <property type="entry name" value="ATP_synth_asu_C"/>
</dbReference>
<dbReference type="InterPro" id="IPR038376">
    <property type="entry name" value="ATP_synth_asu_C_sf"/>
</dbReference>
<dbReference type="InterPro" id="IPR033732">
    <property type="entry name" value="ATP_synth_F1_a_nt-bd_dom"/>
</dbReference>
<dbReference type="InterPro" id="IPR005294">
    <property type="entry name" value="ATP_synth_F1_asu"/>
</dbReference>
<dbReference type="InterPro" id="IPR004100">
    <property type="entry name" value="ATPase_F1/V1/A1_a/bsu_N"/>
</dbReference>
<dbReference type="InterPro" id="IPR036121">
    <property type="entry name" value="ATPase_F1/V1/A1_a/bsu_N_sf"/>
</dbReference>
<dbReference type="InterPro" id="IPR000194">
    <property type="entry name" value="ATPase_F1/V1/A1_a/bsu_nucl-bd"/>
</dbReference>
<dbReference type="InterPro" id="IPR027417">
    <property type="entry name" value="P-loop_NTPase"/>
</dbReference>
<dbReference type="NCBIfam" id="TIGR00962">
    <property type="entry name" value="atpA"/>
    <property type="match status" value="1"/>
</dbReference>
<dbReference type="NCBIfam" id="NF009884">
    <property type="entry name" value="PRK13343.1"/>
    <property type="match status" value="1"/>
</dbReference>
<dbReference type="PANTHER" id="PTHR48082">
    <property type="entry name" value="ATP SYNTHASE SUBUNIT ALPHA, MITOCHONDRIAL"/>
    <property type="match status" value="1"/>
</dbReference>
<dbReference type="PANTHER" id="PTHR48082:SF2">
    <property type="entry name" value="ATP SYNTHASE SUBUNIT ALPHA, MITOCHONDRIAL"/>
    <property type="match status" value="1"/>
</dbReference>
<dbReference type="Pfam" id="PF00006">
    <property type="entry name" value="ATP-synt_ab"/>
    <property type="match status" value="1"/>
</dbReference>
<dbReference type="Pfam" id="PF00306">
    <property type="entry name" value="ATP-synt_ab_C"/>
    <property type="match status" value="1"/>
</dbReference>
<dbReference type="Pfam" id="PF02874">
    <property type="entry name" value="ATP-synt_ab_N"/>
    <property type="match status" value="1"/>
</dbReference>
<dbReference type="PIRSF" id="PIRSF039088">
    <property type="entry name" value="F_ATPase_subunit_alpha"/>
    <property type="match status" value="1"/>
</dbReference>
<dbReference type="SUPFAM" id="SSF47917">
    <property type="entry name" value="C-terminal domain of alpha and beta subunits of F1 ATP synthase"/>
    <property type="match status" value="1"/>
</dbReference>
<dbReference type="SUPFAM" id="SSF50615">
    <property type="entry name" value="N-terminal domain of alpha and beta subunits of F1 ATP synthase"/>
    <property type="match status" value="1"/>
</dbReference>
<dbReference type="SUPFAM" id="SSF52540">
    <property type="entry name" value="P-loop containing nucleoside triphosphate hydrolases"/>
    <property type="match status" value="1"/>
</dbReference>
<comment type="function">
    <text evidence="1">Produces ATP from ADP in the presence of a proton gradient across the membrane. The alpha chain is a regulatory subunit.</text>
</comment>
<comment type="catalytic activity">
    <reaction evidence="1">
        <text>ATP + H2O + 4 H(+)(in) = ADP + phosphate + 5 H(+)(out)</text>
        <dbReference type="Rhea" id="RHEA:57720"/>
        <dbReference type="ChEBI" id="CHEBI:15377"/>
        <dbReference type="ChEBI" id="CHEBI:15378"/>
        <dbReference type="ChEBI" id="CHEBI:30616"/>
        <dbReference type="ChEBI" id="CHEBI:43474"/>
        <dbReference type="ChEBI" id="CHEBI:456216"/>
        <dbReference type="EC" id="7.1.2.2"/>
    </reaction>
</comment>
<comment type="subunit">
    <text evidence="1">F-type ATPases have 2 components, CF(1) - the catalytic core - and CF(0) - the membrane proton channel. CF(1) has five subunits: alpha(3), beta(3), gamma(1), delta(1), epsilon(1). CF(0) has three main subunits: a(1), b(2) and c(9-12). The alpha and beta chains form an alternating ring which encloses part of the gamma chain. CF(1) is attached to CF(0) by a central stalk formed by the gamma and epsilon chains, while a peripheral stalk is formed by the delta and b chains.</text>
</comment>
<comment type="subcellular location">
    <subcellularLocation>
        <location evidence="1">Cell membrane</location>
        <topology evidence="1">Peripheral membrane protein</topology>
    </subcellularLocation>
</comment>
<comment type="similarity">
    <text evidence="1">Belongs to the ATPase alpha/beta chains family.</text>
</comment>
<keyword id="KW-0066">ATP synthesis</keyword>
<keyword id="KW-0067">ATP-binding</keyword>
<keyword id="KW-1003">Cell membrane</keyword>
<keyword id="KW-0139">CF(1)</keyword>
<keyword id="KW-0375">Hydrogen ion transport</keyword>
<keyword id="KW-0406">Ion transport</keyword>
<keyword id="KW-0472">Membrane</keyword>
<keyword id="KW-0547">Nucleotide-binding</keyword>
<keyword id="KW-1278">Translocase</keyword>
<keyword id="KW-0813">Transport</keyword>
<accession>B4U2D9</accession>